<gene>
    <name evidence="1" type="primary">azoR</name>
    <name type="ordered locus">MARTH_orf135</name>
</gene>
<evidence type="ECO:0000255" key="1">
    <source>
        <dbReference type="HAMAP-Rule" id="MF_01216"/>
    </source>
</evidence>
<dbReference type="EC" id="1.6.5.-" evidence="1"/>
<dbReference type="EC" id="1.7.1.17" evidence="1"/>
<dbReference type="EMBL" id="CP001047">
    <property type="protein sequence ID" value="ACF07072.1"/>
    <property type="molecule type" value="Genomic_DNA"/>
</dbReference>
<dbReference type="RefSeq" id="WP_012498029.1">
    <property type="nucleotide sequence ID" value="NC_011025.1"/>
</dbReference>
<dbReference type="SMR" id="B3PM20"/>
<dbReference type="STRING" id="243272.MARTH_orf135"/>
<dbReference type="KEGG" id="mat:MARTH_orf135"/>
<dbReference type="eggNOG" id="COG1182">
    <property type="taxonomic scope" value="Bacteria"/>
</dbReference>
<dbReference type="HOGENOM" id="CLU_088964_2_0_14"/>
<dbReference type="Proteomes" id="UP000008812">
    <property type="component" value="Chromosome"/>
</dbReference>
<dbReference type="GO" id="GO:0009055">
    <property type="term" value="F:electron transfer activity"/>
    <property type="evidence" value="ECO:0007669"/>
    <property type="project" value="UniProtKB-UniRule"/>
</dbReference>
<dbReference type="GO" id="GO:0010181">
    <property type="term" value="F:FMN binding"/>
    <property type="evidence" value="ECO:0007669"/>
    <property type="project" value="UniProtKB-UniRule"/>
</dbReference>
<dbReference type="GO" id="GO:0016652">
    <property type="term" value="F:oxidoreductase activity, acting on NAD(P)H as acceptor"/>
    <property type="evidence" value="ECO:0007669"/>
    <property type="project" value="UniProtKB-UniRule"/>
</dbReference>
<dbReference type="GO" id="GO:0016655">
    <property type="term" value="F:oxidoreductase activity, acting on NAD(P)H, quinone or similar compound as acceptor"/>
    <property type="evidence" value="ECO:0007669"/>
    <property type="project" value="InterPro"/>
</dbReference>
<dbReference type="Gene3D" id="3.40.50.360">
    <property type="match status" value="1"/>
</dbReference>
<dbReference type="HAMAP" id="MF_01216">
    <property type="entry name" value="Azoreductase_type1"/>
    <property type="match status" value="1"/>
</dbReference>
<dbReference type="InterPro" id="IPR003680">
    <property type="entry name" value="Flavodoxin_fold"/>
</dbReference>
<dbReference type="InterPro" id="IPR029039">
    <property type="entry name" value="Flavoprotein-like_sf"/>
</dbReference>
<dbReference type="InterPro" id="IPR050104">
    <property type="entry name" value="FMN-dep_NADH:Q_OxRdtase_AzoR1"/>
</dbReference>
<dbReference type="InterPro" id="IPR023048">
    <property type="entry name" value="NADH:quinone_OxRdtase_FMN_depd"/>
</dbReference>
<dbReference type="NCBIfam" id="NF002370">
    <property type="entry name" value="PRK01355.1"/>
    <property type="match status" value="1"/>
</dbReference>
<dbReference type="PANTHER" id="PTHR43741">
    <property type="entry name" value="FMN-DEPENDENT NADH-AZOREDUCTASE 1"/>
    <property type="match status" value="1"/>
</dbReference>
<dbReference type="PANTHER" id="PTHR43741:SF4">
    <property type="entry name" value="FMN-DEPENDENT NADH:QUINONE OXIDOREDUCTASE"/>
    <property type="match status" value="1"/>
</dbReference>
<dbReference type="Pfam" id="PF02525">
    <property type="entry name" value="Flavodoxin_2"/>
    <property type="match status" value="1"/>
</dbReference>
<dbReference type="SUPFAM" id="SSF52218">
    <property type="entry name" value="Flavoproteins"/>
    <property type="match status" value="1"/>
</dbReference>
<protein>
    <recommendedName>
        <fullName evidence="1">FMN-dependent NADH:quinone oxidoreductase</fullName>
        <ecNumber evidence="1">1.6.5.-</ecNumber>
    </recommendedName>
    <alternativeName>
        <fullName evidence="1">Azo-dye reductase</fullName>
    </alternativeName>
    <alternativeName>
        <fullName evidence="1">FMN-dependent NADH-azo compound oxidoreductase</fullName>
    </alternativeName>
    <alternativeName>
        <fullName evidence="1">FMN-dependent NADH-azoreductase</fullName>
        <ecNumber evidence="1">1.7.1.17</ecNumber>
    </alternativeName>
</protein>
<name>AZOR_META1</name>
<accession>B3PM20</accession>
<keyword id="KW-0285">Flavoprotein</keyword>
<keyword id="KW-0288">FMN</keyword>
<keyword id="KW-0520">NAD</keyword>
<keyword id="KW-0560">Oxidoreductase</keyword>
<keyword id="KW-1185">Reference proteome</keyword>
<organism>
    <name type="scientific">Metamycoplasma arthritidis (strain 158L3-1)</name>
    <name type="common">Mycoplasma arthritidis</name>
    <dbReference type="NCBI Taxonomy" id="243272"/>
    <lineage>
        <taxon>Bacteria</taxon>
        <taxon>Bacillati</taxon>
        <taxon>Mycoplasmatota</taxon>
        <taxon>Mycoplasmoidales</taxon>
        <taxon>Metamycoplasmataceae</taxon>
        <taxon>Metamycoplasma</taxon>
    </lineage>
</organism>
<proteinExistence type="inferred from homology"/>
<feature type="chain" id="PRO_1000164762" description="FMN-dependent NADH:quinone oxidoreductase">
    <location>
        <begin position="1"/>
        <end position="196"/>
    </location>
</feature>
<feature type="binding site" evidence="1">
    <location>
        <position position="10"/>
    </location>
    <ligand>
        <name>FMN</name>
        <dbReference type="ChEBI" id="CHEBI:58210"/>
    </ligand>
</feature>
<feature type="binding site" evidence="1">
    <location>
        <begin position="17"/>
        <end position="19"/>
    </location>
    <ligand>
        <name>FMN</name>
        <dbReference type="ChEBI" id="CHEBI:58210"/>
    </ligand>
</feature>
<comment type="function">
    <text evidence="1">Quinone reductase that provides resistance to thiol-specific stress caused by electrophilic quinones.</text>
</comment>
<comment type="function">
    <text evidence="1">Also exhibits azoreductase activity. Catalyzes the reductive cleavage of the azo bond in aromatic azo compounds to the corresponding amines.</text>
</comment>
<comment type="catalytic activity">
    <reaction evidence="1">
        <text>2 a quinone + NADH + H(+) = 2 a 1,4-benzosemiquinone + NAD(+)</text>
        <dbReference type="Rhea" id="RHEA:65952"/>
        <dbReference type="ChEBI" id="CHEBI:15378"/>
        <dbReference type="ChEBI" id="CHEBI:57540"/>
        <dbReference type="ChEBI" id="CHEBI:57945"/>
        <dbReference type="ChEBI" id="CHEBI:132124"/>
        <dbReference type="ChEBI" id="CHEBI:134225"/>
    </reaction>
</comment>
<comment type="catalytic activity">
    <reaction evidence="1">
        <text>N,N-dimethyl-1,4-phenylenediamine + anthranilate + 2 NAD(+) = 2-(4-dimethylaminophenyl)diazenylbenzoate + 2 NADH + 2 H(+)</text>
        <dbReference type="Rhea" id="RHEA:55872"/>
        <dbReference type="ChEBI" id="CHEBI:15378"/>
        <dbReference type="ChEBI" id="CHEBI:15783"/>
        <dbReference type="ChEBI" id="CHEBI:16567"/>
        <dbReference type="ChEBI" id="CHEBI:57540"/>
        <dbReference type="ChEBI" id="CHEBI:57945"/>
        <dbReference type="ChEBI" id="CHEBI:71579"/>
        <dbReference type="EC" id="1.7.1.17"/>
    </reaction>
</comment>
<comment type="cofactor">
    <cofactor evidence="1">
        <name>FMN</name>
        <dbReference type="ChEBI" id="CHEBI:58210"/>
    </cofactor>
    <text evidence="1">Binds 1 FMN per subunit.</text>
</comment>
<comment type="subunit">
    <text evidence="1">Homodimer.</text>
</comment>
<comment type="similarity">
    <text evidence="1">Belongs to the azoreductase type 1 family.</text>
</comment>
<reference key="1">
    <citation type="journal article" date="2008" name="Infect. Immun.">
        <title>Genome of Mycoplasma arthritidis.</title>
        <authorList>
            <person name="Dybvig K."/>
            <person name="Zuhua C."/>
            <person name="Lao P."/>
            <person name="Jordan D.S."/>
            <person name="French C.T."/>
            <person name="Tu A.H."/>
            <person name="Loraine A.E."/>
        </authorList>
    </citation>
    <scope>NUCLEOTIDE SEQUENCE [LARGE SCALE GENOMIC DNA]</scope>
    <source>
        <strain>158L3-1</strain>
    </source>
</reference>
<sequence>MKKVLVLLSSPVAKENSYSTYFATKFVEEYQKINQEDEIKIIDLNSFDVSQKTLTSGNFATFFNENDSDALINELKSVDKLIVASPMINFNVPATLKNYLDHICVANKTFSYKYKAKGASIGLLDHLKVQIITSQGAPSGWYSFSSHTKYLEGLFNFLGIEIAPSIEITGTKVDPKPKEELYLEFEQEIIKKASEF</sequence>